<reference key="1">
    <citation type="journal article" date="2008" name="Nucleic Acids Res.">
        <title>The complete nucleotide sequences of the five genetically distinct plastid genomes of Oenothera, subsection Oenothera: I. Sequence evaluation and plastome evolution.</title>
        <authorList>
            <person name="Greiner S."/>
            <person name="Wang X."/>
            <person name="Rauwolf U."/>
            <person name="Silber M.V."/>
            <person name="Mayer K."/>
            <person name="Meurer J."/>
            <person name="Haberer G."/>
            <person name="Herrmann R.G."/>
        </authorList>
    </citation>
    <scope>NUCLEOTIDE SEQUENCE [LARGE SCALE GENOMIC DNA]</scope>
    <source>
        <strain>cv. Rr-lamarckiana Sweden</strain>
    </source>
</reference>
<comment type="function">
    <text evidence="1">RuBisCO catalyzes two reactions: the carboxylation of D-ribulose 1,5-bisphosphate, the primary event in carbon dioxide fixation, as well as the oxidative fragmentation of the pentose substrate in the photorespiration process. Both reactions occur simultaneously and in competition at the same active site.</text>
</comment>
<comment type="catalytic activity">
    <reaction evidence="1">
        <text>2 (2R)-3-phosphoglycerate + 2 H(+) = D-ribulose 1,5-bisphosphate + CO2 + H2O</text>
        <dbReference type="Rhea" id="RHEA:23124"/>
        <dbReference type="ChEBI" id="CHEBI:15377"/>
        <dbReference type="ChEBI" id="CHEBI:15378"/>
        <dbReference type="ChEBI" id="CHEBI:16526"/>
        <dbReference type="ChEBI" id="CHEBI:57870"/>
        <dbReference type="ChEBI" id="CHEBI:58272"/>
        <dbReference type="EC" id="4.1.1.39"/>
    </reaction>
</comment>
<comment type="catalytic activity">
    <reaction evidence="1">
        <text>D-ribulose 1,5-bisphosphate + O2 = 2-phosphoglycolate + (2R)-3-phosphoglycerate + 2 H(+)</text>
        <dbReference type="Rhea" id="RHEA:36631"/>
        <dbReference type="ChEBI" id="CHEBI:15378"/>
        <dbReference type="ChEBI" id="CHEBI:15379"/>
        <dbReference type="ChEBI" id="CHEBI:57870"/>
        <dbReference type="ChEBI" id="CHEBI:58033"/>
        <dbReference type="ChEBI" id="CHEBI:58272"/>
    </reaction>
</comment>
<comment type="cofactor">
    <cofactor evidence="1">
        <name>Mg(2+)</name>
        <dbReference type="ChEBI" id="CHEBI:18420"/>
    </cofactor>
    <text evidence="1">Binds 1 Mg(2+) ion per subunit.</text>
</comment>
<comment type="subunit">
    <text evidence="1">Heterohexadecamer of 8 large chains and 8 small chains; disulfide-linked. The disulfide link is formed within the large subunit homodimers.</text>
</comment>
<comment type="subcellular location">
    <subcellularLocation>
        <location>Plastid</location>
        <location>Chloroplast</location>
    </subcellularLocation>
</comment>
<comment type="PTM">
    <text evidence="1">The disulfide bond which can form in the large chain dimeric partners within the hexadecamer appears to be associated with oxidative stress and protein turnover.</text>
</comment>
<comment type="miscellaneous">
    <text evidence="1">The basic functional RuBisCO is composed of a large chain homodimer in a 'head-to-tail' conformation. In form I RuBisCO this homodimer is arranged in a barrel-like tetramer with the small subunits forming a tetrameric 'cap' on each end of the 'barrel'.</text>
</comment>
<comment type="similarity">
    <text evidence="1">Belongs to the RuBisCO large chain family. Type I subfamily.</text>
</comment>
<accession>B0Z527</accession>
<evidence type="ECO:0000255" key="1">
    <source>
        <dbReference type="HAMAP-Rule" id="MF_01338"/>
    </source>
</evidence>
<protein>
    <recommendedName>
        <fullName evidence="1">Ribulose bisphosphate carboxylase large chain</fullName>
        <shortName evidence="1">RuBisCO large subunit</shortName>
        <ecNumber evidence="1">4.1.1.39</ecNumber>
    </recommendedName>
</protein>
<gene>
    <name evidence="1" type="primary">rbcL</name>
</gene>
<name>RBL_OENGL</name>
<sequence length="475" mass="52797">MSPQTETKASVGFKAGVKDYKLTYYTPEYETKDTDILAAFRVTPQPGVPPEEAGAAVAAESSTGTWTTVWTDGLTSLDRYKGRCYHIEPVAGEENQYICYVAYPLDLFEEGSVTNMFTSIVGNVFGFKALRALRLEDLRIPTAYVKTFQGPPHGIQVERDKLNKYGRPLLGCTIKPKLGLSAKNYGRAVYECLRGGLDFTKDDENVNSQPFMRWRDRFLFCAEAIYKSQAETGEIKGHYLNATAGTCEEMMKRAIFARELGVPIVMHDYLTGGFTANTSLAHYCRDNGLLLHIHRAMHAVIDRQKNHGIHFRVLAKALRMSGGDHIHSGTVVGKLEGERDITLGFVDLLRDDFIEKDRSRGIYFTQDWVSLPGVLPVASGGIHVWHMPALTEIFGDDSVLQFGGGTLGHPWGNAPGAVANRVALEACVQARNEGRDLAREGNEIIREACKWSPELAAACEVWKEIKFEFQAMDTL</sequence>
<keyword id="KW-0007">Acetylation</keyword>
<keyword id="KW-0113">Calvin cycle</keyword>
<keyword id="KW-0120">Carbon dioxide fixation</keyword>
<keyword id="KW-0150">Chloroplast</keyword>
<keyword id="KW-1015">Disulfide bond</keyword>
<keyword id="KW-0456">Lyase</keyword>
<keyword id="KW-0460">Magnesium</keyword>
<keyword id="KW-0479">Metal-binding</keyword>
<keyword id="KW-0488">Methylation</keyword>
<keyword id="KW-0503">Monooxygenase</keyword>
<keyword id="KW-0560">Oxidoreductase</keyword>
<keyword id="KW-0601">Photorespiration</keyword>
<keyword id="KW-0602">Photosynthesis</keyword>
<keyword id="KW-0934">Plastid</keyword>
<geneLocation type="chloroplast"/>
<feature type="propeptide" id="PRO_0000355796" evidence="1">
    <location>
        <begin position="1"/>
        <end position="2"/>
    </location>
</feature>
<feature type="chain" id="PRO_0000355797" description="Ribulose bisphosphate carboxylase large chain">
    <location>
        <begin position="3"/>
        <end position="475"/>
    </location>
</feature>
<feature type="active site" description="Proton acceptor" evidence="1">
    <location>
        <position position="175"/>
    </location>
</feature>
<feature type="active site" description="Proton acceptor" evidence="1">
    <location>
        <position position="294"/>
    </location>
</feature>
<feature type="binding site" description="in homodimeric partner" evidence="1">
    <location>
        <position position="123"/>
    </location>
    <ligand>
        <name>substrate</name>
    </ligand>
</feature>
<feature type="binding site" evidence="1">
    <location>
        <position position="173"/>
    </location>
    <ligand>
        <name>substrate</name>
    </ligand>
</feature>
<feature type="binding site" evidence="1">
    <location>
        <position position="177"/>
    </location>
    <ligand>
        <name>substrate</name>
    </ligand>
</feature>
<feature type="binding site" description="via carbamate group" evidence="1">
    <location>
        <position position="201"/>
    </location>
    <ligand>
        <name>Mg(2+)</name>
        <dbReference type="ChEBI" id="CHEBI:18420"/>
    </ligand>
</feature>
<feature type="binding site" evidence="1">
    <location>
        <position position="203"/>
    </location>
    <ligand>
        <name>Mg(2+)</name>
        <dbReference type="ChEBI" id="CHEBI:18420"/>
    </ligand>
</feature>
<feature type="binding site" evidence="1">
    <location>
        <position position="204"/>
    </location>
    <ligand>
        <name>Mg(2+)</name>
        <dbReference type="ChEBI" id="CHEBI:18420"/>
    </ligand>
</feature>
<feature type="binding site" evidence="1">
    <location>
        <position position="295"/>
    </location>
    <ligand>
        <name>substrate</name>
    </ligand>
</feature>
<feature type="binding site" evidence="1">
    <location>
        <position position="327"/>
    </location>
    <ligand>
        <name>substrate</name>
    </ligand>
</feature>
<feature type="binding site" evidence="1">
    <location>
        <position position="379"/>
    </location>
    <ligand>
        <name>substrate</name>
    </ligand>
</feature>
<feature type="site" description="Transition state stabilizer" evidence="1">
    <location>
        <position position="334"/>
    </location>
</feature>
<feature type="modified residue" description="N-acetylproline" evidence="1">
    <location>
        <position position="3"/>
    </location>
</feature>
<feature type="modified residue" description="N6,N6,N6-trimethyllysine" evidence="1">
    <location>
        <position position="14"/>
    </location>
</feature>
<feature type="modified residue" description="N6-carboxylysine" evidence="1">
    <location>
        <position position="201"/>
    </location>
</feature>
<feature type="disulfide bond" description="Interchain; in linked form" evidence="1">
    <location>
        <position position="247"/>
    </location>
</feature>
<dbReference type="EC" id="4.1.1.39" evidence="1"/>
<dbReference type="EMBL" id="EU262890">
    <property type="protein sequence ID" value="ABX10020.1"/>
    <property type="molecule type" value="Genomic_DNA"/>
</dbReference>
<dbReference type="RefSeq" id="YP_001687266.1">
    <property type="nucleotide sequence ID" value="NC_010360.2"/>
</dbReference>
<dbReference type="SMR" id="B0Z527"/>
<dbReference type="GeneID" id="5955230"/>
<dbReference type="GO" id="GO:0009507">
    <property type="term" value="C:chloroplast"/>
    <property type="evidence" value="ECO:0007669"/>
    <property type="project" value="UniProtKB-SubCell"/>
</dbReference>
<dbReference type="GO" id="GO:0000287">
    <property type="term" value="F:magnesium ion binding"/>
    <property type="evidence" value="ECO:0007669"/>
    <property type="project" value="UniProtKB-UniRule"/>
</dbReference>
<dbReference type="GO" id="GO:0004497">
    <property type="term" value="F:monooxygenase activity"/>
    <property type="evidence" value="ECO:0007669"/>
    <property type="project" value="UniProtKB-KW"/>
</dbReference>
<dbReference type="GO" id="GO:0016984">
    <property type="term" value="F:ribulose-bisphosphate carboxylase activity"/>
    <property type="evidence" value="ECO:0007669"/>
    <property type="project" value="UniProtKB-UniRule"/>
</dbReference>
<dbReference type="GO" id="GO:0009853">
    <property type="term" value="P:photorespiration"/>
    <property type="evidence" value="ECO:0007669"/>
    <property type="project" value="UniProtKB-KW"/>
</dbReference>
<dbReference type="GO" id="GO:0019253">
    <property type="term" value="P:reductive pentose-phosphate cycle"/>
    <property type="evidence" value="ECO:0007669"/>
    <property type="project" value="UniProtKB-UniRule"/>
</dbReference>
<dbReference type="CDD" id="cd08212">
    <property type="entry name" value="RuBisCO_large_I"/>
    <property type="match status" value="1"/>
</dbReference>
<dbReference type="FunFam" id="3.20.20.110:FF:000001">
    <property type="entry name" value="Ribulose bisphosphate carboxylase large chain"/>
    <property type="match status" value="1"/>
</dbReference>
<dbReference type="FunFam" id="3.30.70.150:FF:000001">
    <property type="entry name" value="Ribulose bisphosphate carboxylase large chain"/>
    <property type="match status" value="1"/>
</dbReference>
<dbReference type="Gene3D" id="3.20.20.110">
    <property type="entry name" value="Ribulose bisphosphate carboxylase, large subunit, C-terminal domain"/>
    <property type="match status" value="1"/>
</dbReference>
<dbReference type="Gene3D" id="3.30.70.150">
    <property type="entry name" value="RuBisCO large subunit, N-terminal domain"/>
    <property type="match status" value="1"/>
</dbReference>
<dbReference type="HAMAP" id="MF_01338">
    <property type="entry name" value="RuBisCO_L_type1"/>
    <property type="match status" value="1"/>
</dbReference>
<dbReference type="InterPro" id="IPR033966">
    <property type="entry name" value="RuBisCO"/>
</dbReference>
<dbReference type="InterPro" id="IPR020878">
    <property type="entry name" value="RuBisCo_large_chain_AS"/>
</dbReference>
<dbReference type="InterPro" id="IPR000685">
    <property type="entry name" value="RuBisCO_lsu_C"/>
</dbReference>
<dbReference type="InterPro" id="IPR036376">
    <property type="entry name" value="RuBisCO_lsu_C_sf"/>
</dbReference>
<dbReference type="InterPro" id="IPR017443">
    <property type="entry name" value="RuBisCO_lsu_fd_N"/>
</dbReference>
<dbReference type="InterPro" id="IPR036422">
    <property type="entry name" value="RuBisCO_lsu_N_sf"/>
</dbReference>
<dbReference type="InterPro" id="IPR020888">
    <property type="entry name" value="RuBisCO_lsuI"/>
</dbReference>
<dbReference type="NCBIfam" id="NF003252">
    <property type="entry name" value="PRK04208.1"/>
    <property type="match status" value="1"/>
</dbReference>
<dbReference type="PANTHER" id="PTHR42704">
    <property type="entry name" value="RIBULOSE BISPHOSPHATE CARBOXYLASE"/>
    <property type="match status" value="1"/>
</dbReference>
<dbReference type="PANTHER" id="PTHR42704:SF15">
    <property type="entry name" value="RIBULOSE BISPHOSPHATE CARBOXYLASE LARGE CHAIN"/>
    <property type="match status" value="1"/>
</dbReference>
<dbReference type="Pfam" id="PF00016">
    <property type="entry name" value="RuBisCO_large"/>
    <property type="match status" value="1"/>
</dbReference>
<dbReference type="Pfam" id="PF02788">
    <property type="entry name" value="RuBisCO_large_N"/>
    <property type="match status" value="1"/>
</dbReference>
<dbReference type="SFLD" id="SFLDG01052">
    <property type="entry name" value="RuBisCO"/>
    <property type="match status" value="1"/>
</dbReference>
<dbReference type="SFLD" id="SFLDS00014">
    <property type="entry name" value="RuBisCO"/>
    <property type="match status" value="1"/>
</dbReference>
<dbReference type="SFLD" id="SFLDG00301">
    <property type="entry name" value="RuBisCO-like_proteins"/>
    <property type="match status" value="1"/>
</dbReference>
<dbReference type="SUPFAM" id="SSF51649">
    <property type="entry name" value="RuBisCo, C-terminal domain"/>
    <property type="match status" value="1"/>
</dbReference>
<dbReference type="SUPFAM" id="SSF54966">
    <property type="entry name" value="RuBisCO, large subunit, small (N-terminal) domain"/>
    <property type="match status" value="1"/>
</dbReference>
<dbReference type="PROSITE" id="PS00157">
    <property type="entry name" value="RUBISCO_LARGE"/>
    <property type="match status" value="1"/>
</dbReference>
<proteinExistence type="inferred from homology"/>
<organism>
    <name type="scientific">Oenothera glazioviana</name>
    <name type="common">Large-flowered evening primrose</name>
    <name type="synonym">Oenothera erythrosepala</name>
    <dbReference type="NCBI Taxonomy" id="482428"/>
    <lineage>
        <taxon>Eukaryota</taxon>
        <taxon>Viridiplantae</taxon>
        <taxon>Streptophyta</taxon>
        <taxon>Embryophyta</taxon>
        <taxon>Tracheophyta</taxon>
        <taxon>Spermatophyta</taxon>
        <taxon>Magnoliopsida</taxon>
        <taxon>eudicotyledons</taxon>
        <taxon>Gunneridae</taxon>
        <taxon>Pentapetalae</taxon>
        <taxon>rosids</taxon>
        <taxon>malvids</taxon>
        <taxon>Myrtales</taxon>
        <taxon>Onagraceae</taxon>
        <taxon>Onagroideae</taxon>
        <taxon>Onagreae</taxon>
        <taxon>Oenothera</taxon>
    </lineage>
</organism>